<evidence type="ECO:0000255" key="1">
    <source>
        <dbReference type="HAMAP-Rule" id="MF_01101"/>
    </source>
</evidence>
<accession>B5XNU5</accession>
<sequence length="151" mass="17100">MSTPEKRPVSFFSLFNRGQHYAKTWPLDKRLAPVFIENRIIRATRYAIRIMPPIAIFTLCWQIALGGQLGPAVATALFALSLPMQGLWWLGKRSVTPLPPSILNWFYEVRGKLQEAGQALAPVEGKPDYQALADTLKRAFKQLDKTFLDDL</sequence>
<dbReference type="EMBL" id="CP000964">
    <property type="protein sequence ID" value="ACI08968.1"/>
    <property type="molecule type" value="Genomic_DNA"/>
</dbReference>
<dbReference type="KEGG" id="kpe:KPK_1462"/>
<dbReference type="HOGENOM" id="CLU_128746_0_0_6"/>
<dbReference type="BioCyc" id="KPNE507522:GI0B-1462-MONOMER"/>
<dbReference type="Proteomes" id="UP000001734">
    <property type="component" value="Chromosome"/>
</dbReference>
<dbReference type="GO" id="GO:0005886">
    <property type="term" value="C:plasma membrane"/>
    <property type="evidence" value="ECO:0007669"/>
    <property type="project" value="UniProtKB-SubCell"/>
</dbReference>
<dbReference type="HAMAP" id="MF_01101">
    <property type="entry name" value="UPF0208"/>
    <property type="match status" value="1"/>
</dbReference>
<dbReference type="InterPro" id="IPR007334">
    <property type="entry name" value="UPF0208"/>
</dbReference>
<dbReference type="NCBIfam" id="NF002493">
    <property type="entry name" value="PRK01816.1"/>
    <property type="match status" value="1"/>
</dbReference>
<dbReference type="Pfam" id="PF04217">
    <property type="entry name" value="DUF412"/>
    <property type="match status" value="1"/>
</dbReference>
<name>Y1462_KLEP3</name>
<comment type="subcellular location">
    <subcellularLocation>
        <location evidence="1">Cell inner membrane</location>
        <topology evidence="1">Multi-pass membrane protein</topology>
    </subcellularLocation>
</comment>
<comment type="similarity">
    <text evidence="1">Belongs to the UPF0208 family.</text>
</comment>
<gene>
    <name type="ordered locus">KPK_1462</name>
</gene>
<feature type="chain" id="PRO_1000136993" description="UPF0208 membrane protein KPK_1462">
    <location>
        <begin position="1"/>
        <end position="151"/>
    </location>
</feature>
<feature type="transmembrane region" description="Helical" evidence="1">
    <location>
        <begin position="46"/>
        <end position="65"/>
    </location>
</feature>
<feature type="transmembrane region" description="Helical" evidence="1">
    <location>
        <begin position="69"/>
        <end position="91"/>
    </location>
</feature>
<reference key="1">
    <citation type="journal article" date="2008" name="PLoS Genet.">
        <title>Complete genome sequence of the N2-fixing broad host range endophyte Klebsiella pneumoniae 342 and virulence predictions verified in mice.</title>
        <authorList>
            <person name="Fouts D.E."/>
            <person name="Tyler H.L."/>
            <person name="DeBoy R.T."/>
            <person name="Daugherty S."/>
            <person name="Ren Q."/>
            <person name="Badger J.H."/>
            <person name="Durkin A.S."/>
            <person name="Huot H."/>
            <person name="Shrivastava S."/>
            <person name="Kothari S."/>
            <person name="Dodson R.J."/>
            <person name="Mohamoud Y."/>
            <person name="Khouri H."/>
            <person name="Roesch L.F.W."/>
            <person name="Krogfelt K.A."/>
            <person name="Struve C."/>
            <person name="Triplett E.W."/>
            <person name="Methe B.A."/>
        </authorList>
    </citation>
    <scope>NUCLEOTIDE SEQUENCE [LARGE SCALE GENOMIC DNA]</scope>
    <source>
        <strain>342</strain>
    </source>
</reference>
<organism>
    <name type="scientific">Klebsiella pneumoniae (strain 342)</name>
    <dbReference type="NCBI Taxonomy" id="507522"/>
    <lineage>
        <taxon>Bacteria</taxon>
        <taxon>Pseudomonadati</taxon>
        <taxon>Pseudomonadota</taxon>
        <taxon>Gammaproteobacteria</taxon>
        <taxon>Enterobacterales</taxon>
        <taxon>Enterobacteriaceae</taxon>
        <taxon>Klebsiella/Raoultella group</taxon>
        <taxon>Klebsiella</taxon>
        <taxon>Klebsiella pneumoniae complex</taxon>
    </lineage>
</organism>
<proteinExistence type="inferred from homology"/>
<keyword id="KW-0997">Cell inner membrane</keyword>
<keyword id="KW-1003">Cell membrane</keyword>
<keyword id="KW-0472">Membrane</keyword>
<keyword id="KW-0812">Transmembrane</keyword>
<keyword id="KW-1133">Transmembrane helix</keyword>
<protein>
    <recommendedName>
        <fullName evidence="1">UPF0208 membrane protein KPK_1462</fullName>
    </recommendedName>
</protein>